<keyword id="KW-0474">Menaquinone biosynthesis</keyword>
<keyword id="KW-0489">Methyltransferase</keyword>
<keyword id="KW-0949">S-adenosyl-L-methionine</keyword>
<keyword id="KW-0808">Transferase</keyword>
<comment type="function">
    <text evidence="1">Methyltransferase required for the conversion of demethylmenaquinol (DMKH2) to menaquinol (MKH2).</text>
</comment>
<comment type="catalytic activity">
    <reaction evidence="1">
        <text>a 2-demethylmenaquinol + S-adenosyl-L-methionine = a menaquinol + S-adenosyl-L-homocysteine + H(+)</text>
        <dbReference type="Rhea" id="RHEA:42640"/>
        <dbReference type="Rhea" id="RHEA-COMP:9539"/>
        <dbReference type="Rhea" id="RHEA-COMP:9563"/>
        <dbReference type="ChEBI" id="CHEBI:15378"/>
        <dbReference type="ChEBI" id="CHEBI:18151"/>
        <dbReference type="ChEBI" id="CHEBI:55437"/>
        <dbReference type="ChEBI" id="CHEBI:57856"/>
        <dbReference type="ChEBI" id="CHEBI:59789"/>
        <dbReference type="EC" id="2.1.1.163"/>
    </reaction>
</comment>
<comment type="pathway">
    <text evidence="1">Quinol/quinone metabolism; menaquinone biosynthesis; menaquinol from 1,4-dihydroxy-2-naphthoate: step 2/2.</text>
</comment>
<comment type="similarity">
    <text evidence="1">Belongs to the class I-like SAM-binding methyltransferase superfamily. MenG/UbiE family.</text>
</comment>
<sequence length="249" mass="28806">MSGFQMPQANFKAGFVRENFNKIAKKYDRFNDWNSFLLHRVWKNHLVREIENNFSGHLHVLDLCCGTGDISLRLENSSFVDHVTCVDFSENMLEIAKTRLKKQAQKGRVHFELGDATKLIQFQNSQFDVVSIGFGLRNVDNLSKAIGEIFRVLKPGGMFLNLDVGKVKNPWIRWIADFYFFKIVPILGYILWGGKNEMFDYLPVSSLSYPDQETLQLILEKEGFQRVQYKNFVFGNVVLHVAKKPSEKT</sequence>
<organism>
    <name type="scientific">Leptospira interrogans serogroup Icterohaemorrhagiae serovar copenhageni (strain Fiocruz L1-130)</name>
    <dbReference type="NCBI Taxonomy" id="267671"/>
    <lineage>
        <taxon>Bacteria</taxon>
        <taxon>Pseudomonadati</taxon>
        <taxon>Spirochaetota</taxon>
        <taxon>Spirochaetia</taxon>
        <taxon>Leptospirales</taxon>
        <taxon>Leptospiraceae</taxon>
        <taxon>Leptospira</taxon>
    </lineage>
</organism>
<name>MENG_LEPIC</name>
<evidence type="ECO:0000255" key="1">
    <source>
        <dbReference type="HAMAP-Rule" id="MF_01813"/>
    </source>
</evidence>
<gene>
    <name evidence="1" type="primary">menG</name>
    <name type="ordered locus">LIC_20171</name>
</gene>
<accession>Q75FL1</accession>
<protein>
    <recommendedName>
        <fullName evidence="1">Demethylmenaquinone methyltransferase</fullName>
        <ecNumber evidence="1">2.1.1.163</ecNumber>
    </recommendedName>
</protein>
<reference key="1">
    <citation type="journal article" date="2004" name="J. Bacteriol.">
        <title>Comparative genomics of two Leptospira interrogans serovars reveals novel insights into physiology and pathogenesis.</title>
        <authorList>
            <person name="Nascimento A.L.T.O."/>
            <person name="Ko A.I."/>
            <person name="Martins E.A.L."/>
            <person name="Monteiro-Vitorello C.B."/>
            <person name="Ho P.L."/>
            <person name="Haake D.A."/>
            <person name="Verjovski-Almeida S."/>
            <person name="Hartskeerl R.A."/>
            <person name="Marques M.V."/>
            <person name="Oliveira M.C."/>
            <person name="Menck C.F.M."/>
            <person name="Leite L.C.C."/>
            <person name="Carrer H."/>
            <person name="Coutinho L.L."/>
            <person name="Degrave W.M."/>
            <person name="Dellagostin O.A."/>
            <person name="El-Dorry H."/>
            <person name="Ferro E.S."/>
            <person name="Ferro M.I.T."/>
            <person name="Furlan L.R."/>
            <person name="Gamberini M."/>
            <person name="Giglioti E.A."/>
            <person name="Goes-Neto A."/>
            <person name="Goldman G.H."/>
            <person name="Goldman M.H.S."/>
            <person name="Harakava R."/>
            <person name="Jeronimo S.M.B."/>
            <person name="Junqueira-de-Azevedo I.L.M."/>
            <person name="Kimura E.T."/>
            <person name="Kuramae E.E."/>
            <person name="Lemos E.G.M."/>
            <person name="Lemos M.V.F."/>
            <person name="Marino C.L."/>
            <person name="Nunes L.R."/>
            <person name="de Oliveira R.C."/>
            <person name="Pereira G.G."/>
            <person name="Reis M.S."/>
            <person name="Schriefer A."/>
            <person name="Siqueira W.J."/>
            <person name="Sommer P."/>
            <person name="Tsai S.M."/>
            <person name="Simpson A.J.G."/>
            <person name="Ferro J.A."/>
            <person name="Camargo L.E.A."/>
            <person name="Kitajima J.P."/>
            <person name="Setubal J.C."/>
            <person name="Van Sluys M.A."/>
        </authorList>
    </citation>
    <scope>NUCLEOTIDE SEQUENCE [LARGE SCALE GENOMIC DNA]</scope>
    <source>
        <strain>Fiocruz L1-130</strain>
    </source>
</reference>
<proteinExistence type="inferred from homology"/>
<feature type="chain" id="PRO_0000193289" description="Demethylmenaquinone methyltransferase">
    <location>
        <begin position="1"/>
        <end position="249"/>
    </location>
</feature>
<feature type="binding site" evidence="1">
    <location>
        <position position="67"/>
    </location>
    <ligand>
        <name>S-adenosyl-L-methionine</name>
        <dbReference type="ChEBI" id="CHEBI:59789"/>
    </ligand>
</feature>
<feature type="binding site" evidence="1">
    <location>
        <position position="87"/>
    </location>
    <ligand>
        <name>S-adenosyl-L-methionine</name>
        <dbReference type="ChEBI" id="CHEBI:59789"/>
    </ligand>
</feature>
<feature type="binding site" evidence="1">
    <location>
        <begin position="115"/>
        <end position="116"/>
    </location>
    <ligand>
        <name>S-adenosyl-L-methionine</name>
        <dbReference type="ChEBI" id="CHEBI:59789"/>
    </ligand>
</feature>
<dbReference type="EC" id="2.1.1.163" evidence="1"/>
<dbReference type="EMBL" id="AE016824">
    <property type="protein sequence ID" value="AAS72199.1"/>
    <property type="molecule type" value="Genomic_DNA"/>
</dbReference>
<dbReference type="RefSeq" id="WP_000012765.1">
    <property type="nucleotide sequence ID" value="NC_005824.1"/>
</dbReference>
<dbReference type="SMR" id="Q75FL1"/>
<dbReference type="KEGG" id="lic:LIC_20171"/>
<dbReference type="HOGENOM" id="CLU_037990_0_0_12"/>
<dbReference type="UniPathway" id="UPA00079">
    <property type="reaction ID" value="UER00169"/>
</dbReference>
<dbReference type="Proteomes" id="UP000007037">
    <property type="component" value="Chromosome II"/>
</dbReference>
<dbReference type="GO" id="GO:0008425">
    <property type="term" value="F:2-methoxy-6-polyprenyl-1,4-benzoquinol methyltransferase activity"/>
    <property type="evidence" value="ECO:0007669"/>
    <property type="project" value="TreeGrafter"/>
</dbReference>
<dbReference type="GO" id="GO:0043770">
    <property type="term" value="F:demethylmenaquinone methyltransferase activity"/>
    <property type="evidence" value="ECO:0007669"/>
    <property type="project" value="UniProtKB-UniRule"/>
</dbReference>
<dbReference type="GO" id="GO:0009234">
    <property type="term" value="P:menaquinone biosynthetic process"/>
    <property type="evidence" value="ECO:0007669"/>
    <property type="project" value="UniProtKB-UniRule"/>
</dbReference>
<dbReference type="GO" id="GO:0032259">
    <property type="term" value="P:methylation"/>
    <property type="evidence" value="ECO:0007669"/>
    <property type="project" value="UniProtKB-KW"/>
</dbReference>
<dbReference type="CDD" id="cd02440">
    <property type="entry name" value="AdoMet_MTases"/>
    <property type="match status" value="1"/>
</dbReference>
<dbReference type="Gene3D" id="3.40.50.150">
    <property type="entry name" value="Vaccinia Virus protein VP39"/>
    <property type="match status" value="1"/>
</dbReference>
<dbReference type="HAMAP" id="MF_01813">
    <property type="entry name" value="MenG_UbiE_methyltr"/>
    <property type="match status" value="1"/>
</dbReference>
<dbReference type="InterPro" id="IPR029063">
    <property type="entry name" value="SAM-dependent_MTases_sf"/>
</dbReference>
<dbReference type="InterPro" id="IPR004033">
    <property type="entry name" value="UbiE/COQ5_MeTrFase"/>
</dbReference>
<dbReference type="InterPro" id="IPR023576">
    <property type="entry name" value="UbiE/COQ5_MeTrFase_CS"/>
</dbReference>
<dbReference type="NCBIfam" id="TIGR01934">
    <property type="entry name" value="MenG_MenH_UbiE"/>
    <property type="match status" value="1"/>
</dbReference>
<dbReference type="PANTHER" id="PTHR43591:SF24">
    <property type="entry name" value="2-METHOXY-6-POLYPRENYL-1,4-BENZOQUINOL METHYLASE, MITOCHONDRIAL"/>
    <property type="match status" value="1"/>
</dbReference>
<dbReference type="PANTHER" id="PTHR43591">
    <property type="entry name" value="METHYLTRANSFERASE"/>
    <property type="match status" value="1"/>
</dbReference>
<dbReference type="Pfam" id="PF01209">
    <property type="entry name" value="Ubie_methyltran"/>
    <property type="match status" value="1"/>
</dbReference>
<dbReference type="SUPFAM" id="SSF53335">
    <property type="entry name" value="S-adenosyl-L-methionine-dependent methyltransferases"/>
    <property type="match status" value="1"/>
</dbReference>
<dbReference type="PROSITE" id="PS51608">
    <property type="entry name" value="SAM_MT_UBIE"/>
    <property type="match status" value="1"/>
</dbReference>
<dbReference type="PROSITE" id="PS01183">
    <property type="entry name" value="UBIE_1"/>
    <property type="match status" value="1"/>
</dbReference>
<dbReference type="PROSITE" id="PS01184">
    <property type="entry name" value="UBIE_2"/>
    <property type="match status" value="1"/>
</dbReference>